<protein>
    <recommendedName>
        <fullName>Caspase-1</fullName>
        <shortName>CASP-1</shortName>
        <ecNumber evidence="2">3.4.22.36</ecNumber>
    </recommendedName>
    <alternativeName>
        <fullName>Interleukin-1 beta convertase</fullName>
        <shortName>IL-1BC</shortName>
    </alternativeName>
    <alternativeName>
        <fullName>Interleukin-1 beta-converting enzyme</fullName>
        <shortName>ICE</shortName>
        <shortName>IL-1 beta-converting enzyme</shortName>
    </alternativeName>
    <alternativeName>
        <fullName>p45</fullName>
    </alternativeName>
    <component>
        <recommendedName>
            <fullName evidence="2">Caspase-1 subunit p20</fullName>
        </recommendedName>
    </component>
    <component>
        <recommendedName>
            <fullName evidence="2">Caspase-1 subunit p10</fullName>
        </recommendedName>
    </component>
</protein>
<feature type="propeptide" id="PRO_0000004517" evidence="3">
    <location>
        <begin position="1"/>
        <end position="119"/>
    </location>
</feature>
<feature type="chain" id="PRO_0000004518" description="Caspase-1 subunit p20" evidence="2">
    <location>
        <begin position="120"/>
        <end position="298"/>
    </location>
</feature>
<feature type="propeptide" id="PRO_0000004519" evidence="3">
    <location>
        <begin position="299"/>
        <end position="317"/>
    </location>
</feature>
<feature type="chain" id="PRO_0000004520" description="Caspase-1 subunit p10" evidence="2">
    <location>
        <begin position="318"/>
        <end position="405"/>
    </location>
</feature>
<feature type="domain" description="CARD" evidence="4">
    <location>
        <begin position="1"/>
        <end position="91"/>
    </location>
</feature>
<feature type="active site" evidence="2">
    <location>
        <position position="238"/>
    </location>
</feature>
<feature type="active site" evidence="2">
    <location>
        <position position="286"/>
    </location>
</feature>
<feature type="modified residue" description="Phosphoserine" evidence="1">
    <location>
        <position position="303"/>
    </location>
</feature>
<feature type="sequence variant">
    <original>V</original>
    <variation>L</variation>
    <location>
        <position position="203"/>
    </location>
</feature>
<feature type="sequence variant">
    <original>N</original>
    <variation>S</variation>
    <location>
        <position position="305"/>
    </location>
</feature>
<keyword id="KW-0053">Apoptosis</keyword>
<keyword id="KW-1003">Cell membrane</keyword>
<keyword id="KW-0963">Cytoplasm</keyword>
<keyword id="KW-0378">Hydrolase</keyword>
<keyword id="KW-0472">Membrane</keyword>
<keyword id="KW-0597">Phosphoprotein</keyword>
<keyword id="KW-0645">Protease</keyword>
<keyword id="KW-1185">Reference proteome</keyword>
<keyword id="KW-0788">Thiol protease</keyword>
<keyword id="KW-0832">Ubl conjugation</keyword>
<keyword id="KW-0865">Zymogen</keyword>
<comment type="function">
    <text evidence="2">Thiol protease involved in a variety of inflammatory processes by proteolytically cleaving other proteins, such as the precursors of the inflammatory cytokines interleukin-1 beta (IL1B) and interleukin 18 (IL18) as well as the pyroptosis inducer Gasdermin-D (GSDMD), into active mature peptides. Plays a key role in cell immunity as an inflammatory response initiator: once activated through formation of an inflammasome complex, it initiates a pro-inflammatory response through the cleavage of the two inflammatory cytokines IL1B and IL18, releasing the mature cytokines which are involved in a variety of inflammatory processes. Cleaves a tetrapeptide after an Asp residue at position P1. Also initiates pyroptosis, a programmed lytic cell death pathway, through cleavage of GSDMD. In contrast to cleavage of interleukin IL1B, recognition and cleavage of GSDMD is not strictly dependent on the consensus cleavage site but depends on an exosite interface on CASP1 that recognizes and binds the Gasdermin-D, C-terminal (GSDMD-CT) part. Cleaves and activates CASP7 in response to bacterial infection, promoting plasma membrane repair. Upon inflammasome activation, during DNA virus infection but not RNA virus challenge, controls antiviral immunity through the cleavage of CGAS, rendering it inactive. In apoptotic cells, cleaves SPHK2 which is released from cells and remains enzymatically active extracellularly.</text>
</comment>
<comment type="catalytic activity">
    <reaction evidence="2">
        <text>Strict requirement for an Asp residue at position P1 and has a preferred cleavage sequence of Tyr-Val-Ala-Asp-|-.</text>
        <dbReference type="EC" id="3.4.22.36"/>
    </reaction>
</comment>
<comment type="subunit">
    <text evidence="1 2">Heterotetramer that consists of two anti-parallel arranged heterodimers, each one formed by a 20 kDa (Caspase-1 subunit p20) and a 10 kDa (Caspase-1 subunit p10) subunit. May be a component of the inflammasome, a protein complex which also includes PYCARD, CARD8 and NLRP2 and whose function would be the activation of pro-inflammatory caspases. Component of the AIM2 PANoptosome complex, a multiprotein complex that drives inflammatory cell death (PANoptosis). Both the p10 and p20 subunits interact with MEFV. Interacts with CARD17P/INCA and CARD18. Interacts with SERPINB1; this interaction regulates CASP1 activity.</text>
</comment>
<comment type="subunit">
    <molecule>Caspase-1 subunit p20</molecule>
    <text evidence="2">Heterotetramer that consists of two anti-parallel arranged heterodimers, each one formed by a 20 kDa (Caspase-1 subunit p20) and a 10 kDa (Caspase-1 subunit p10) subunit.</text>
</comment>
<comment type="subunit">
    <molecule>Caspase-1 subunit p10</molecule>
    <text evidence="2">Heterotetramer that consists of two anti-parallel arranged heterodimers, each one formed by a 20 kDa (Caspase-1 subunit p20) and a 10 kDa (Caspase-1 subunit p10) subunit.</text>
</comment>
<comment type="subcellular location">
    <subcellularLocation>
        <location evidence="2">Cytoplasm</location>
    </subcellularLocation>
    <subcellularLocation>
        <location evidence="2">Cell membrane</location>
    </subcellularLocation>
</comment>
<comment type="PTM">
    <text evidence="2">The two subunits are derived from the precursor sequence by an autocatalytic mechanism.</text>
</comment>
<comment type="PTM">
    <text evidence="2">Ubiquitinated via 'Lys-11'-linked polyubiquitination. Deubiquitinated by USP8.</text>
</comment>
<comment type="similarity">
    <text evidence="5">Belongs to the peptidase C14A family.</text>
</comment>
<evidence type="ECO:0000250" key="1">
    <source>
        <dbReference type="UniProtKB" id="P29452"/>
    </source>
</evidence>
<evidence type="ECO:0000250" key="2">
    <source>
        <dbReference type="UniProtKB" id="P29466"/>
    </source>
</evidence>
<evidence type="ECO:0000255" key="3"/>
<evidence type="ECO:0000255" key="4">
    <source>
        <dbReference type="PROSITE-ProRule" id="PRU00046"/>
    </source>
</evidence>
<evidence type="ECO:0000305" key="5"/>
<name>CASP1_HORSE</name>
<dbReference type="EC" id="3.4.22.36" evidence="2"/>
<dbReference type="EMBL" id="AF090119">
    <property type="protein sequence ID" value="AAD46400.1"/>
    <property type="molecule type" value="mRNA"/>
</dbReference>
<dbReference type="RefSeq" id="NP_001075311.1">
    <property type="nucleotide sequence ID" value="NM_001081842.1"/>
</dbReference>
<dbReference type="SMR" id="Q9TV13"/>
<dbReference type="FunCoup" id="Q9TV13">
    <property type="interactions" value="215"/>
</dbReference>
<dbReference type="STRING" id="9796.ENSECAP00000021890"/>
<dbReference type="PaxDb" id="9796-ENSECAP00000021890"/>
<dbReference type="GeneID" id="100033888"/>
<dbReference type="KEGG" id="ecb:100033888"/>
<dbReference type="CTD" id="834"/>
<dbReference type="InParanoid" id="Q9TV13"/>
<dbReference type="OrthoDB" id="6097640at2759"/>
<dbReference type="BRENDA" id="3.4.22.36">
    <property type="organism ID" value="2120"/>
</dbReference>
<dbReference type="Proteomes" id="UP000002281">
    <property type="component" value="Unplaced"/>
</dbReference>
<dbReference type="GO" id="GO:0097169">
    <property type="term" value="C:AIM2 inflammasome complex"/>
    <property type="evidence" value="ECO:0000250"/>
    <property type="project" value="UniProtKB"/>
</dbReference>
<dbReference type="GO" id="GO:0072557">
    <property type="term" value="C:IPAF inflammasome complex"/>
    <property type="evidence" value="ECO:0000250"/>
    <property type="project" value="UniProtKB"/>
</dbReference>
<dbReference type="GO" id="GO:0072558">
    <property type="term" value="C:NLRP1 inflammasome complex"/>
    <property type="evidence" value="ECO:0000250"/>
    <property type="project" value="UniProtKB"/>
</dbReference>
<dbReference type="GO" id="GO:0072559">
    <property type="term" value="C:NLRP3 inflammasome complex"/>
    <property type="evidence" value="ECO:0000250"/>
    <property type="project" value="UniProtKB"/>
</dbReference>
<dbReference type="GO" id="GO:0005886">
    <property type="term" value="C:plasma membrane"/>
    <property type="evidence" value="ECO:0007669"/>
    <property type="project" value="UniProtKB-SubCell"/>
</dbReference>
<dbReference type="GO" id="GO:0004197">
    <property type="term" value="F:cysteine-type endopeptidase activity"/>
    <property type="evidence" value="ECO:0000250"/>
    <property type="project" value="UniProtKB"/>
</dbReference>
<dbReference type="GO" id="GO:0006915">
    <property type="term" value="P:apoptotic process"/>
    <property type="evidence" value="ECO:0007669"/>
    <property type="project" value="UniProtKB-KW"/>
</dbReference>
<dbReference type="GO" id="GO:0001819">
    <property type="term" value="P:positive regulation of cytokine production"/>
    <property type="evidence" value="ECO:0000250"/>
    <property type="project" value="UniProtKB"/>
</dbReference>
<dbReference type="GO" id="GO:0032731">
    <property type="term" value="P:positive regulation of interleukin-1 beta production"/>
    <property type="evidence" value="ECO:0000250"/>
    <property type="project" value="UniProtKB"/>
</dbReference>
<dbReference type="GO" id="GO:0016540">
    <property type="term" value="P:protein autoprocessing"/>
    <property type="evidence" value="ECO:0000250"/>
    <property type="project" value="UniProtKB"/>
</dbReference>
<dbReference type="GO" id="GO:0070269">
    <property type="term" value="P:pyroptotic inflammatory response"/>
    <property type="evidence" value="ECO:0000250"/>
    <property type="project" value="UniProtKB"/>
</dbReference>
<dbReference type="GO" id="GO:0042981">
    <property type="term" value="P:regulation of apoptotic process"/>
    <property type="evidence" value="ECO:0007669"/>
    <property type="project" value="InterPro"/>
</dbReference>
<dbReference type="GO" id="GO:0050727">
    <property type="term" value="P:regulation of inflammatory response"/>
    <property type="evidence" value="ECO:0000250"/>
    <property type="project" value="UniProtKB"/>
</dbReference>
<dbReference type="CDD" id="cd08325">
    <property type="entry name" value="CARD_CASP1-like"/>
    <property type="match status" value="1"/>
</dbReference>
<dbReference type="CDD" id="cd00032">
    <property type="entry name" value="CASc"/>
    <property type="match status" value="1"/>
</dbReference>
<dbReference type="FunFam" id="1.10.533.10:FF:000031">
    <property type="entry name" value="Caspase 1, isoform CRA_b"/>
    <property type="match status" value="1"/>
</dbReference>
<dbReference type="FunFam" id="3.40.50.1460:FF:000007">
    <property type="entry name" value="Caspase-1"/>
    <property type="match status" value="1"/>
</dbReference>
<dbReference type="Gene3D" id="3.40.50.1460">
    <property type="match status" value="1"/>
</dbReference>
<dbReference type="Gene3D" id="1.10.533.10">
    <property type="entry name" value="Death Domain, Fas"/>
    <property type="match status" value="1"/>
</dbReference>
<dbReference type="InterPro" id="IPR001315">
    <property type="entry name" value="CARD"/>
</dbReference>
<dbReference type="InterPro" id="IPR029030">
    <property type="entry name" value="Caspase-like_dom_sf"/>
</dbReference>
<dbReference type="InterPro" id="IPR033139">
    <property type="entry name" value="Caspase_cys_AS"/>
</dbReference>
<dbReference type="InterPro" id="IPR016129">
    <property type="entry name" value="Caspase_his_AS"/>
</dbReference>
<dbReference type="InterPro" id="IPR011029">
    <property type="entry name" value="DEATH-like_dom_sf"/>
</dbReference>
<dbReference type="InterPro" id="IPR002398">
    <property type="entry name" value="Pept_C14"/>
</dbReference>
<dbReference type="InterPro" id="IPR011600">
    <property type="entry name" value="Pept_C14_caspase"/>
</dbReference>
<dbReference type="InterPro" id="IPR002138">
    <property type="entry name" value="Pept_C14_p10"/>
</dbReference>
<dbReference type="InterPro" id="IPR001309">
    <property type="entry name" value="Pept_C14_p20"/>
</dbReference>
<dbReference type="InterPro" id="IPR015917">
    <property type="entry name" value="Pept_C14A"/>
</dbReference>
<dbReference type="PANTHER" id="PTHR47901">
    <property type="entry name" value="CASPASE RECRUITMENT DOMAIN-CONTAINING PROTEIN 18"/>
    <property type="match status" value="1"/>
</dbReference>
<dbReference type="PANTHER" id="PTHR47901:SF3">
    <property type="entry name" value="CASPASE-1"/>
    <property type="match status" value="1"/>
</dbReference>
<dbReference type="Pfam" id="PF00619">
    <property type="entry name" value="CARD"/>
    <property type="match status" value="1"/>
</dbReference>
<dbReference type="Pfam" id="PF00656">
    <property type="entry name" value="Peptidase_C14"/>
    <property type="match status" value="1"/>
</dbReference>
<dbReference type="PIRSF" id="PIRSF038001">
    <property type="entry name" value="Caspase_ICE"/>
    <property type="match status" value="1"/>
</dbReference>
<dbReference type="PRINTS" id="PR00376">
    <property type="entry name" value="IL1BCENZYME"/>
</dbReference>
<dbReference type="SMART" id="SM00114">
    <property type="entry name" value="CARD"/>
    <property type="match status" value="1"/>
</dbReference>
<dbReference type="SMART" id="SM00115">
    <property type="entry name" value="CASc"/>
    <property type="match status" value="1"/>
</dbReference>
<dbReference type="SUPFAM" id="SSF52129">
    <property type="entry name" value="Caspase-like"/>
    <property type="match status" value="1"/>
</dbReference>
<dbReference type="SUPFAM" id="SSF47986">
    <property type="entry name" value="DEATH domain"/>
    <property type="match status" value="1"/>
</dbReference>
<dbReference type="PROSITE" id="PS50209">
    <property type="entry name" value="CARD"/>
    <property type="match status" value="1"/>
</dbReference>
<dbReference type="PROSITE" id="PS01122">
    <property type="entry name" value="CASPASE_CYS"/>
    <property type="match status" value="1"/>
</dbReference>
<dbReference type="PROSITE" id="PS01121">
    <property type="entry name" value="CASPASE_HIS"/>
    <property type="match status" value="1"/>
</dbReference>
<dbReference type="PROSITE" id="PS50207">
    <property type="entry name" value="CASPASE_P10"/>
    <property type="match status" value="1"/>
</dbReference>
<dbReference type="PROSITE" id="PS50208">
    <property type="entry name" value="CASPASE_P20"/>
    <property type="match status" value="1"/>
</dbReference>
<accession>Q9TV13</accession>
<sequence length="405" mass="45331">MADKVLKEKRRLFIRSVGTGTVNSLLDELLEKRVLNQEEMEKVRDENATVMDKARALIDAVIRKGPQACQIFIGHICEDDPHLAETLRLSSGPQSGNFLKTQDSQAVVHSSPALQAMPDDLAKLALSGPKVSLKLCSPEVVERIWKEKSAEMYPIMGKSMTRTRLALIICNTEFDNLSRRAGAEVDIASMKVLLEGLGYSVEVKENLTALDMTTELKAFAARPEHRSSDSTFLVFMSHGIREGICGKKFSEKVPDVLEVNTIFQIFNTRNCPNLRDKPKVIIIQACRGENQGVVWLKDSTGTSGNSSSLAPDDFEDDAIKKAHVEKDFIAFCSSTPDTVSWRSPTTGSVFIEKLIENLQEYAWSCDLEEIFRKVRLSFELPDARAQMPTAERVTLTRRFYLFPGH</sequence>
<reference key="1">
    <citation type="journal article" date="1999" name="DNA Seq.">
        <title>Nucleotide sequence of equine caspase-1 cDNA.</title>
        <authorList>
            <person name="Wardlow S."/>
            <person name="Penha-Goncalves M.N."/>
            <person name="Argyle D.J."/>
            <person name="Onions D.E."/>
            <person name="Nicolson L."/>
        </authorList>
    </citation>
    <scope>NUCLEOTIDE SEQUENCE [MRNA]</scope>
</reference>
<organism>
    <name type="scientific">Equus caballus</name>
    <name type="common">Horse</name>
    <dbReference type="NCBI Taxonomy" id="9796"/>
    <lineage>
        <taxon>Eukaryota</taxon>
        <taxon>Metazoa</taxon>
        <taxon>Chordata</taxon>
        <taxon>Craniata</taxon>
        <taxon>Vertebrata</taxon>
        <taxon>Euteleostomi</taxon>
        <taxon>Mammalia</taxon>
        <taxon>Eutheria</taxon>
        <taxon>Laurasiatheria</taxon>
        <taxon>Perissodactyla</taxon>
        <taxon>Equidae</taxon>
        <taxon>Equus</taxon>
    </lineage>
</organism>
<gene>
    <name type="primary">CASP1</name>
    <name type="synonym">IL1BC</name>
</gene>
<proteinExistence type="evidence at transcript level"/>